<sequence>HAAFTVAHEIGHLLGLSHDDSKFCEENFGSTEDKRLMSSILTSIDASKPWSKCTSATITEFLDDGHGNCLLDLPRKQIPGPEELPGQTYDASQQCNLTFGPEYSVCPGMDVCARLWCAVVRQGQMVCLTKKLPAVEGTPCGKGRICLQGKCVDKTKKKYYSTSSHGNWGSWGSWGQCSRSCGGGVQFAYRHCNNPAPKNNGRYCTGK</sequence>
<dbReference type="EC" id="3.4.24.-"/>
<dbReference type="EMBL" id="AF192771">
    <property type="protein sequence ID" value="AAF07177.1"/>
    <property type="molecule type" value="mRNA"/>
</dbReference>
<dbReference type="SMR" id="Q9TT92"/>
<dbReference type="STRING" id="9913.ENSBTAP00000000849"/>
<dbReference type="BindingDB" id="Q9TT92"/>
<dbReference type="ChEMBL" id="CHEMBL2673"/>
<dbReference type="MEROPS" id="M12.225"/>
<dbReference type="GlyCosmos" id="Q9TT92">
    <property type="glycosylation" value="4 sites, No reported glycans"/>
</dbReference>
<dbReference type="GlyGen" id="Q9TT92">
    <property type="glycosylation" value="4 sites"/>
</dbReference>
<dbReference type="PaxDb" id="9913-ENSBTAP00000000849"/>
<dbReference type="eggNOG" id="KOG3538">
    <property type="taxonomic scope" value="Eukaryota"/>
</dbReference>
<dbReference type="InParanoid" id="Q9TT92"/>
<dbReference type="OrthoDB" id="9936463at2759"/>
<dbReference type="BRENDA" id="3.4.24.B12">
    <property type="organism ID" value="908"/>
</dbReference>
<dbReference type="Proteomes" id="UP000009136">
    <property type="component" value="Unplaced"/>
</dbReference>
<dbReference type="GO" id="GO:0005576">
    <property type="term" value="C:extracellular region"/>
    <property type="evidence" value="ECO:0007669"/>
    <property type="project" value="UniProtKB-KW"/>
</dbReference>
<dbReference type="GO" id="GO:0004175">
    <property type="term" value="F:endopeptidase activity"/>
    <property type="evidence" value="ECO:0000250"/>
    <property type="project" value="UniProtKB"/>
</dbReference>
<dbReference type="GO" id="GO:0046872">
    <property type="term" value="F:metal ion binding"/>
    <property type="evidence" value="ECO:0007669"/>
    <property type="project" value="UniProtKB-KW"/>
</dbReference>
<dbReference type="GO" id="GO:0004222">
    <property type="term" value="F:metalloendopeptidase activity"/>
    <property type="evidence" value="ECO:0000250"/>
    <property type="project" value="UniProtKB"/>
</dbReference>
<dbReference type="GO" id="GO:0008237">
    <property type="term" value="F:metallopeptidase activity"/>
    <property type="evidence" value="ECO:0000314"/>
    <property type="project" value="UniProtKB"/>
</dbReference>
<dbReference type="GO" id="GO:0022617">
    <property type="term" value="P:extracellular matrix disassembly"/>
    <property type="evidence" value="ECO:0000250"/>
    <property type="project" value="UniProtKB"/>
</dbReference>
<dbReference type="GO" id="GO:0007520">
    <property type="term" value="P:myoblast fusion"/>
    <property type="evidence" value="ECO:0000250"/>
    <property type="project" value="UniProtKB"/>
</dbReference>
<dbReference type="GO" id="GO:0006508">
    <property type="term" value="P:proteolysis"/>
    <property type="evidence" value="ECO:0007669"/>
    <property type="project" value="UniProtKB-KW"/>
</dbReference>
<dbReference type="FunFam" id="3.40.1620.60:FF:000006">
    <property type="entry name" value="A disintegrin and metalloproteinase with thrombospondin motifs 5"/>
    <property type="match status" value="1"/>
</dbReference>
<dbReference type="FunFam" id="2.20.100.10:FF:000001">
    <property type="entry name" value="semaphorin-5A isoform X1"/>
    <property type="match status" value="1"/>
</dbReference>
<dbReference type="Gene3D" id="3.40.1620.60">
    <property type="match status" value="1"/>
</dbReference>
<dbReference type="Gene3D" id="3.40.390.10">
    <property type="entry name" value="Collagenase (Catalytic Domain)"/>
    <property type="match status" value="1"/>
</dbReference>
<dbReference type="Gene3D" id="2.20.100.10">
    <property type="entry name" value="Thrombospondin type-1 (TSP1) repeat"/>
    <property type="match status" value="1"/>
</dbReference>
<dbReference type="InterPro" id="IPR006586">
    <property type="entry name" value="ADAM_Cys-rich"/>
</dbReference>
<dbReference type="InterPro" id="IPR050439">
    <property type="entry name" value="ADAMTS_ADAMTS-like"/>
</dbReference>
<dbReference type="InterPro" id="IPR041645">
    <property type="entry name" value="ADAMTS_CR_2"/>
</dbReference>
<dbReference type="InterPro" id="IPR024079">
    <property type="entry name" value="MetalloPept_cat_dom_sf"/>
</dbReference>
<dbReference type="InterPro" id="IPR001590">
    <property type="entry name" value="Peptidase_M12B"/>
</dbReference>
<dbReference type="InterPro" id="IPR000884">
    <property type="entry name" value="TSP1_rpt"/>
</dbReference>
<dbReference type="InterPro" id="IPR036383">
    <property type="entry name" value="TSP1_rpt_sf"/>
</dbReference>
<dbReference type="PANTHER" id="PTHR13723:SF37">
    <property type="entry name" value="A DISINTEGRIN AND METALLOPROTEINASE WITH THROMBOSPONDIN MOTIFS 5"/>
    <property type="match status" value="1"/>
</dbReference>
<dbReference type="PANTHER" id="PTHR13723">
    <property type="entry name" value="ADAMTS A DISINTEGRIN AND METALLOPROTEASE WITH THROMBOSPONDIN MOTIFS PROTEASE"/>
    <property type="match status" value="1"/>
</dbReference>
<dbReference type="Pfam" id="PF17771">
    <property type="entry name" value="ADAMTS_CR_2"/>
    <property type="match status" value="1"/>
</dbReference>
<dbReference type="Pfam" id="PF01421">
    <property type="entry name" value="Reprolysin"/>
    <property type="match status" value="1"/>
</dbReference>
<dbReference type="Pfam" id="PF00090">
    <property type="entry name" value="TSP_1"/>
    <property type="match status" value="1"/>
</dbReference>
<dbReference type="SMART" id="SM00608">
    <property type="entry name" value="ACR"/>
    <property type="match status" value="1"/>
</dbReference>
<dbReference type="SUPFAM" id="SSF55486">
    <property type="entry name" value="Metalloproteases ('zincins'), catalytic domain"/>
    <property type="match status" value="1"/>
</dbReference>
<dbReference type="SUPFAM" id="SSF82895">
    <property type="entry name" value="TSP-1 type 1 repeat"/>
    <property type="match status" value="1"/>
</dbReference>
<dbReference type="PROSITE" id="PS50215">
    <property type="entry name" value="ADAM_MEPRO"/>
    <property type="match status" value="1"/>
</dbReference>
<dbReference type="PROSITE" id="PS50092">
    <property type="entry name" value="TSP1"/>
    <property type="match status" value="1"/>
</dbReference>
<dbReference type="PROSITE" id="PS00142">
    <property type="entry name" value="ZINC_PROTEASE"/>
    <property type="match status" value="1"/>
</dbReference>
<comment type="function">
    <text evidence="2">Metalloproteinase that plays an important role in connective tissue organization, development, inflammation and cell migration. Extracellular matrix (ECM) degrading enzyme that shows proteolytic activity toward the hyalectan group of chondroitin sulfate proteoglycans (CSPGs) including ACAN, VCAN, BCAN and NCAN. Cleavage within the hyalectans occurs at Glu-Xaa recognition motifs. Plays a role in embryonic development, including limb and cardiac morphogenesis, and skeletal muscle development through its VCAN remodeling properties. Cleaves VCAN in the pericellular matrix surrounding myoblasts, facilitating myoblast contact and fusion which is required for skeletal muscle development and regeneration. Participates in the development of brown adipose tissue and browning of white adipose tissue. Plays an important role for T-lymphocyte migration from draining lymph nodes following viral infection.</text>
</comment>
<comment type="cofactor">
    <cofactor evidence="3">
        <name>Zn(2+)</name>
        <dbReference type="ChEBI" id="CHEBI:29105"/>
    </cofactor>
    <text evidence="3">Binds 1 zinc ion per subunit.</text>
</comment>
<comment type="subcellular location">
    <subcellularLocation>
        <location evidence="3">Secreted</location>
        <location evidence="3">Extracellular space</location>
        <location evidence="3">Extracellular matrix</location>
    </subcellularLocation>
</comment>
<comment type="domain">
    <text>The spacer domain and the TSP type-1 domains are important for a tight interaction with the extracellular matrix.</text>
</comment>
<comment type="PTM">
    <text evidence="3">The precursor is cleaved by furin and PCSK7 outside of the cell.</text>
</comment>
<comment type="PTM">
    <text evidence="1">Glycosylated. Can be O-fucosylated by POFUT2 on a serine or a threonine residue found within the consensus sequence C1-X(2)-(S/T)-C2-G of the TSP type-1 repeat domains where C1 and C2 are the first and second cysteine residue of the repeat, respectively. Fucosylated repeats can then be further glycosylated by the addition of a beta-1,3-glucose residue by the glucosyltransferase, B3GALTL. Fucosylation mediates the efficient secretion of ADAMTS family members. Can also be C-glycosylated with one or two mannose molecules on tryptophan residues within the consensus sequence W-X-X-W of the TPRs, and N-glycosylated. These other glycosylations can also facilitate secretion (By similarity).</text>
</comment>
<feature type="chain" id="PRO_0000078210" description="A disintegrin and metalloproteinase with thrombospondin motifs 5">
    <location>
        <begin position="1" status="less than"/>
        <end position="207" status="greater than"/>
    </location>
</feature>
<feature type="domain" description="Peptidase M12B" evidence="6">
    <location>
        <begin position="1" status="less than"/>
        <end position="74"/>
    </location>
</feature>
<feature type="domain" description="Disintegrin">
    <location>
        <begin position="83"/>
        <end position="164"/>
    </location>
</feature>
<feature type="domain" description="TSP type-1" evidence="5">
    <location>
        <begin position="165"/>
        <end position="205"/>
    </location>
</feature>
<feature type="active site" evidence="6 7">
    <location>
        <position position="9"/>
    </location>
</feature>
<feature type="binding site" evidence="3">
    <location>
        <position position="8"/>
    </location>
    <ligand>
        <name>Zn(2+)</name>
        <dbReference type="ChEBI" id="CHEBI:29105"/>
        <note>catalytic</note>
    </ligand>
</feature>
<feature type="binding site" evidence="3">
    <location>
        <position position="12"/>
    </location>
    <ligand>
        <name>Zn(2+)</name>
        <dbReference type="ChEBI" id="CHEBI:29105"/>
        <note>catalytic</note>
    </ligand>
</feature>
<feature type="binding site" evidence="3">
    <location>
        <position position="18"/>
    </location>
    <ligand>
        <name>Zn(2+)</name>
        <dbReference type="ChEBI" id="CHEBI:29105"/>
        <note>catalytic</note>
    </ligand>
</feature>
<feature type="glycosylation site" description="N-linked (GlcNAc...) asparagine" evidence="4">
    <location>
        <position position="96"/>
    </location>
</feature>
<feature type="glycosylation site" description="C-linked (Man) tryptophan" evidence="3">
    <location>
        <position position="168"/>
    </location>
</feature>
<feature type="glycosylation site" description="C-linked (Man) tryptophan" evidence="3">
    <location>
        <position position="171"/>
    </location>
</feature>
<feature type="glycosylation site" description="O-linked (Fuc...) serine" evidence="3">
    <location>
        <position position="180"/>
    </location>
</feature>
<feature type="disulfide bond" evidence="3">
    <location>
        <begin position="24"/>
        <end position="53"/>
    </location>
</feature>
<feature type="disulfide bond" evidence="3">
    <location>
        <begin position="95"/>
        <end position="117"/>
    </location>
</feature>
<feature type="disulfide bond" evidence="3">
    <location>
        <begin position="106"/>
        <end position="127"/>
    </location>
</feature>
<feature type="disulfide bond" evidence="3">
    <location>
        <begin position="112"/>
        <end position="146"/>
    </location>
</feature>
<feature type="disulfide bond" evidence="3">
    <location>
        <begin position="140"/>
        <end position="151"/>
    </location>
</feature>
<feature type="non-terminal residue">
    <location>
        <position position="1"/>
    </location>
</feature>
<feature type="non-terminal residue">
    <location>
        <position position="207"/>
    </location>
</feature>
<evidence type="ECO:0000250" key="1"/>
<evidence type="ECO:0000250" key="2">
    <source>
        <dbReference type="UniProtKB" id="Q9R001"/>
    </source>
</evidence>
<evidence type="ECO:0000250" key="3">
    <source>
        <dbReference type="UniProtKB" id="Q9UNA0"/>
    </source>
</evidence>
<evidence type="ECO:0000255" key="4"/>
<evidence type="ECO:0000255" key="5">
    <source>
        <dbReference type="PROSITE-ProRule" id="PRU00210"/>
    </source>
</evidence>
<evidence type="ECO:0000255" key="6">
    <source>
        <dbReference type="PROSITE-ProRule" id="PRU00276"/>
    </source>
</evidence>
<evidence type="ECO:0000255" key="7">
    <source>
        <dbReference type="PROSITE-ProRule" id="PRU10095"/>
    </source>
</evidence>
<keyword id="KW-1015">Disulfide bond</keyword>
<keyword id="KW-0272">Extracellular matrix</keyword>
<keyword id="KW-0325">Glycoprotein</keyword>
<keyword id="KW-0378">Hydrolase</keyword>
<keyword id="KW-0479">Metal-binding</keyword>
<keyword id="KW-0482">Metalloprotease</keyword>
<keyword id="KW-0645">Protease</keyword>
<keyword id="KW-1185">Reference proteome</keyword>
<keyword id="KW-0964">Secreted</keyword>
<keyword id="KW-0862">Zinc</keyword>
<organism>
    <name type="scientific">Bos taurus</name>
    <name type="common">Bovine</name>
    <dbReference type="NCBI Taxonomy" id="9913"/>
    <lineage>
        <taxon>Eukaryota</taxon>
        <taxon>Metazoa</taxon>
        <taxon>Chordata</taxon>
        <taxon>Craniata</taxon>
        <taxon>Vertebrata</taxon>
        <taxon>Euteleostomi</taxon>
        <taxon>Mammalia</taxon>
        <taxon>Eutheria</taxon>
        <taxon>Laurasiatheria</taxon>
        <taxon>Artiodactyla</taxon>
        <taxon>Ruminantia</taxon>
        <taxon>Pecora</taxon>
        <taxon>Bovidae</taxon>
        <taxon>Bovinae</taxon>
        <taxon>Bos</taxon>
    </lineage>
</organism>
<protein>
    <recommendedName>
        <fullName>A disintegrin and metalloproteinase with thrombospondin motifs 5</fullName>
        <shortName>ADAM-TS 5</shortName>
        <shortName>ADAM-TS5</shortName>
        <shortName>ADAMTS-5</shortName>
        <ecNumber>3.4.24.-</ecNumber>
    </recommendedName>
    <alternativeName>
        <fullName>ADMP-2</fullName>
    </alternativeName>
    <alternativeName>
        <fullName>Aggrecanase-2</fullName>
    </alternativeName>
</protein>
<proteinExistence type="evidence at transcript level"/>
<name>ATS5_BOVIN</name>
<accession>Q9TT92</accession>
<reference key="1">
    <citation type="journal article" date="1999" name="Biochem. Biophys. Res. Commun.">
        <title>Expression of ADAMTS homologues in articular cartilage.</title>
        <authorList>
            <person name="Flannery C.R."/>
            <person name="Little C.B."/>
            <person name="Hughes C.E."/>
            <person name="Caterson B."/>
        </authorList>
    </citation>
    <scope>NUCLEOTIDE SEQUENCE [MRNA]</scope>
</reference>
<reference key="2">
    <citation type="journal article" date="2000" name="J. Biol. Chem.">
        <title>n-3 fatty acids specifically modulate catabolic factors involved in articular cartilage degradation.</title>
        <authorList>
            <person name="Curtis C.L."/>
            <person name="Hughes C.E."/>
            <person name="Flannery C.R."/>
            <person name="Little C.B."/>
            <person name="Harwood J.L."/>
            <person name="Caterson B."/>
        </authorList>
    </citation>
    <scope>NUCLEOTIDE SEQUENCE [MRNA]</scope>
</reference>
<gene>
    <name type="primary">ADAMTS5</name>
</gene>